<keyword id="KW-0963">Cytoplasm</keyword>
<keyword id="KW-0238">DNA-binding</keyword>
<keyword id="KW-1185">Reference proteome</keyword>
<keyword id="KW-0804">Transcription</keyword>
<keyword id="KW-0805">Transcription regulation</keyword>
<evidence type="ECO:0000255" key="1">
    <source>
        <dbReference type="HAMAP-Rule" id="MF_00918"/>
    </source>
</evidence>
<evidence type="ECO:0000305" key="2"/>
<sequence>MGRKWNNIKDKKASKDANTSRIYAKFGREIYVAAKQGEPDPESNQALRVVLERAKTYNVPRTIIDRAVEKAKGGSEENYDELRYEGFGPNGAMVIVDTLTNNVNRTAADVRAAFSKNSGNMGVNGSVAYMFDATAVIGLEGKTSDEVLEILMEADVDARDILEEEDSVIVYAEPDQFHAVQSALKGAGVEEFTVAELTMLAQSDVTLPEDAQAQFEKMVDALEDLEDVQQVYHNVDLGE</sequence>
<feature type="chain" id="PRO_0000175754" description="Probable transcriptional regulatory protein BC_0539">
    <location>
        <begin position="1"/>
        <end position="239"/>
    </location>
</feature>
<accession>Q813Z5</accession>
<reference key="1">
    <citation type="journal article" date="2003" name="Nature">
        <title>Genome sequence of Bacillus cereus and comparative analysis with Bacillus anthracis.</title>
        <authorList>
            <person name="Ivanova N."/>
            <person name="Sorokin A."/>
            <person name="Anderson I."/>
            <person name="Galleron N."/>
            <person name="Candelon B."/>
            <person name="Kapatral V."/>
            <person name="Bhattacharyya A."/>
            <person name="Reznik G."/>
            <person name="Mikhailova N."/>
            <person name="Lapidus A."/>
            <person name="Chu L."/>
            <person name="Mazur M."/>
            <person name="Goltsman E."/>
            <person name="Larsen N."/>
            <person name="D'Souza M."/>
            <person name="Walunas T."/>
            <person name="Grechkin Y."/>
            <person name="Pusch G."/>
            <person name="Haselkorn R."/>
            <person name="Fonstein M."/>
            <person name="Ehrlich S.D."/>
            <person name="Overbeek R."/>
            <person name="Kyrpides N.C."/>
        </authorList>
    </citation>
    <scope>NUCLEOTIDE SEQUENCE [LARGE SCALE GENOMIC DNA]</scope>
    <source>
        <strain>ATCC 14579 / DSM 31 / CCUG 7414 / JCM 2152 / NBRC 15305 / NCIMB 9373 / NCTC 2599 / NRRL B-3711</strain>
    </source>
</reference>
<proteinExistence type="inferred from homology"/>
<gene>
    <name type="ordered locus">BC_0539</name>
</gene>
<protein>
    <recommendedName>
        <fullName evidence="1">Probable transcriptional regulatory protein BC_0539</fullName>
    </recommendedName>
</protein>
<organism>
    <name type="scientific">Bacillus cereus (strain ATCC 14579 / DSM 31 / CCUG 7414 / JCM 2152 / NBRC 15305 / NCIMB 9373 / NCTC 2599 / NRRL B-3711)</name>
    <dbReference type="NCBI Taxonomy" id="226900"/>
    <lineage>
        <taxon>Bacteria</taxon>
        <taxon>Bacillati</taxon>
        <taxon>Bacillota</taxon>
        <taxon>Bacilli</taxon>
        <taxon>Bacillales</taxon>
        <taxon>Bacillaceae</taxon>
        <taxon>Bacillus</taxon>
        <taxon>Bacillus cereus group</taxon>
    </lineage>
</organism>
<name>Y539_BACCR</name>
<dbReference type="EMBL" id="AE016877">
    <property type="protein sequence ID" value="AAP07560.1"/>
    <property type="status" value="ALT_INIT"/>
    <property type="molecule type" value="Genomic_DNA"/>
</dbReference>
<dbReference type="RefSeq" id="NP_830359.2">
    <property type="nucleotide sequence ID" value="NC_004722.1"/>
</dbReference>
<dbReference type="RefSeq" id="WP_000532952.1">
    <property type="nucleotide sequence ID" value="NZ_CP138336.1"/>
</dbReference>
<dbReference type="SMR" id="Q813Z5"/>
<dbReference type="STRING" id="226900.BC_0539"/>
<dbReference type="KEGG" id="bce:BC0539"/>
<dbReference type="PATRIC" id="fig|226900.8.peg.496"/>
<dbReference type="HOGENOM" id="CLU_062974_2_0_9"/>
<dbReference type="OrthoDB" id="9781053at2"/>
<dbReference type="Proteomes" id="UP000001417">
    <property type="component" value="Chromosome"/>
</dbReference>
<dbReference type="GO" id="GO:0005829">
    <property type="term" value="C:cytosol"/>
    <property type="evidence" value="ECO:0000318"/>
    <property type="project" value="GO_Central"/>
</dbReference>
<dbReference type="GO" id="GO:0003677">
    <property type="term" value="F:DNA binding"/>
    <property type="evidence" value="ECO:0007669"/>
    <property type="project" value="UniProtKB-UniRule"/>
</dbReference>
<dbReference type="GO" id="GO:0006355">
    <property type="term" value="P:regulation of DNA-templated transcription"/>
    <property type="evidence" value="ECO:0007669"/>
    <property type="project" value="UniProtKB-UniRule"/>
</dbReference>
<dbReference type="FunFam" id="1.10.10.200:FF:000003">
    <property type="entry name" value="Probable transcriptional regulatory protein YeeN"/>
    <property type="match status" value="1"/>
</dbReference>
<dbReference type="FunFam" id="3.30.70.980:FF:000004">
    <property type="entry name" value="Probable transcriptional regulatory protein YeeN"/>
    <property type="match status" value="1"/>
</dbReference>
<dbReference type="Gene3D" id="1.10.10.200">
    <property type="match status" value="1"/>
</dbReference>
<dbReference type="Gene3D" id="3.30.70.980">
    <property type="match status" value="2"/>
</dbReference>
<dbReference type="HAMAP" id="MF_00693">
    <property type="entry name" value="Transcrip_reg_TACO1"/>
    <property type="match status" value="1"/>
</dbReference>
<dbReference type="HAMAP" id="MF_00918">
    <property type="entry name" value="Transcrip_reg_TACO1_YeeN"/>
    <property type="match status" value="1"/>
</dbReference>
<dbReference type="InterPro" id="IPR017856">
    <property type="entry name" value="Integrase-like_N"/>
</dbReference>
<dbReference type="InterPro" id="IPR048300">
    <property type="entry name" value="TACO1_YebC-like_2nd/3rd_dom"/>
</dbReference>
<dbReference type="InterPro" id="IPR049083">
    <property type="entry name" value="TACO1_YebC_N"/>
</dbReference>
<dbReference type="InterPro" id="IPR002876">
    <property type="entry name" value="Transcrip_reg_TACO1-like"/>
</dbReference>
<dbReference type="InterPro" id="IPR026564">
    <property type="entry name" value="Transcrip_reg_TACO1-like_dom3"/>
</dbReference>
<dbReference type="InterPro" id="IPR026562">
    <property type="entry name" value="Transcrip_reg_TACO1_YeeN"/>
</dbReference>
<dbReference type="InterPro" id="IPR029072">
    <property type="entry name" value="YebC-like"/>
</dbReference>
<dbReference type="NCBIfam" id="NF001030">
    <property type="entry name" value="PRK00110.1"/>
    <property type="match status" value="1"/>
</dbReference>
<dbReference type="NCBIfam" id="NF009044">
    <property type="entry name" value="PRK12378.1"/>
    <property type="match status" value="1"/>
</dbReference>
<dbReference type="NCBIfam" id="TIGR01033">
    <property type="entry name" value="YebC/PmpR family DNA-binding transcriptional regulator"/>
    <property type="match status" value="1"/>
</dbReference>
<dbReference type="PANTHER" id="PTHR12532">
    <property type="entry name" value="TRANSLATIONAL ACTIVATOR OF CYTOCHROME C OXIDASE 1"/>
    <property type="match status" value="1"/>
</dbReference>
<dbReference type="PANTHER" id="PTHR12532:SF0">
    <property type="entry name" value="TRANSLATIONAL ACTIVATOR OF CYTOCHROME C OXIDASE 1"/>
    <property type="match status" value="1"/>
</dbReference>
<dbReference type="Pfam" id="PF20772">
    <property type="entry name" value="TACO1_YebC_N"/>
    <property type="match status" value="1"/>
</dbReference>
<dbReference type="Pfam" id="PF01709">
    <property type="entry name" value="Transcrip_reg"/>
    <property type="match status" value="1"/>
</dbReference>
<dbReference type="SUPFAM" id="SSF75625">
    <property type="entry name" value="YebC-like"/>
    <property type="match status" value="1"/>
</dbReference>
<comment type="subcellular location">
    <subcellularLocation>
        <location evidence="1">Cytoplasm</location>
    </subcellularLocation>
</comment>
<comment type="similarity">
    <text evidence="1">Belongs to the TACO1 family. YeeN subfamily.</text>
</comment>
<comment type="sequence caution" evidence="2">
    <conflict type="erroneous initiation">
        <sequence resource="EMBL-CDS" id="AAP07560"/>
    </conflict>
</comment>